<reference key="1">
    <citation type="journal article" date="2000" name="Nature">
        <title>Sequence and analysis of chromosome 1 of the plant Arabidopsis thaliana.</title>
        <authorList>
            <person name="Theologis A."/>
            <person name="Ecker J.R."/>
            <person name="Palm C.J."/>
            <person name="Federspiel N.A."/>
            <person name="Kaul S."/>
            <person name="White O."/>
            <person name="Alonso J."/>
            <person name="Altafi H."/>
            <person name="Araujo R."/>
            <person name="Bowman C.L."/>
            <person name="Brooks S.Y."/>
            <person name="Buehler E."/>
            <person name="Chan A."/>
            <person name="Chao Q."/>
            <person name="Chen H."/>
            <person name="Cheuk R.F."/>
            <person name="Chin C.W."/>
            <person name="Chung M.K."/>
            <person name="Conn L."/>
            <person name="Conway A.B."/>
            <person name="Conway A.R."/>
            <person name="Creasy T.H."/>
            <person name="Dewar K."/>
            <person name="Dunn P."/>
            <person name="Etgu P."/>
            <person name="Feldblyum T.V."/>
            <person name="Feng J.-D."/>
            <person name="Fong B."/>
            <person name="Fujii C.Y."/>
            <person name="Gill J.E."/>
            <person name="Goldsmith A.D."/>
            <person name="Haas B."/>
            <person name="Hansen N.F."/>
            <person name="Hughes B."/>
            <person name="Huizar L."/>
            <person name="Hunter J.L."/>
            <person name="Jenkins J."/>
            <person name="Johnson-Hopson C."/>
            <person name="Khan S."/>
            <person name="Khaykin E."/>
            <person name="Kim C.J."/>
            <person name="Koo H.L."/>
            <person name="Kremenetskaia I."/>
            <person name="Kurtz D.B."/>
            <person name="Kwan A."/>
            <person name="Lam B."/>
            <person name="Langin-Hooper S."/>
            <person name="Lee A."/>
            <person name="Lee J.M."/>
            <person name="Lenz C.A."/>
            <person name="Li J.H."/>
            <person name="Li Y.-P."/>
            <person name="Lin X."/>
            <person name="Liu S.X."/>
            <person name="Liu Z.A."/>
            <person name="Luros J.S."/>
            <person name="Maiti R."/>
            <person name="Marziali A."/>
            <person name="Militscher J."/>
            <person name="Miranda M."/>
            <person name="Nguyen M."/>
            <person name="Nierman W.C."/>
            <person name="Osborne B.I."/>
            <person name="Pai G."/>
            <person name="Peterson J."/>
            <person name="Pham P.K."/>
            <person name="Rizzo M."/>
            <person name="Rooney T."/>
            <person name="Rowley D."/>
            <person name="Sakano H."/>
            <person name="Salzberg S.L."/>
            <person name="Schwartz J.R."/>
            <person name="Shinn P."/>
            <person name="Southwick A.M."/>
            <person name="Sun H."/>
            <person name="Tallon L.J."/>
            <person name="Tambunga G."/>
            <person name="Toriumi M.J."/>
            <person name="Town C.D."/>
            <person name="Utterback T."/>
            <person name="Van Aken S."/>
            <person name="Vaysberg M."/>
            <person name="Vysotskaia V.S."/>
            <person name="Walker M."/>
            <person name="Wu D."/>
            <person name="Yu G."/>
            <person name="Fraser C.M."/>
            <person name="Venter J.C."/>
            <person name="Davis R.W."/>
        </authorList>
    </citation>
    <scope>NUCLEOTIDE SEQUENCE [LARGE SCALE GENOMIC DNA]</scope>
    <source>
        <strain>cv. Columbia</strain>
    </source>
</reference>
<reference key="2">
    <citation type="journal article" date="2017" name="Plant J.">
        <title>Araport11: a complete reannotation of the Arabidopsis thaliana reference genome.</title>
        <authorList>
            <person name="Cheng C.Y."/>
            <person name="Krishnakumar V."/>
            <person name="Chan A.P."/>
            <person name="Thibaud-Nissen F."/>
            <person name="Schobel S."/>
            <person name="Town C.D."/>
        </authorList>
    </citation>
    <scope>GENOME REANNOTATION</scope>
    <source>
        <strain>cv. Columbia</strain>
    </source>
</reference>
<reference key="3">
    <citation type="submission" date="2006-09" db="EMBL/GenBank/DDBJ databases">
        <title>Arabidopsis ORF clones.</title>
        <authorList>
            <person name="Bautista V.R."/>
            <person name="Kim C.J."/>
            <person name="Chen H."/>
            <person name="Quinitio C."/>
            <person name="Ecker J.R."/>
        </authorList>
    </citation>
    <scope>NUCLEOTIDE SEQUENCE [LARGE SCALE MRNA]</scope>
    <source>
        <strain>cv. Columbia</strain>
    </source>
</reference>
<reference key="4">
    <citation type="journal article" date="2010" name="Plant Cell">
        <title>Analysis of TETRAKETIDE ?-PYRONE REDUCTASE function in Arabidopsis thaliana reveals a previously unknown, but conserved, biochemical pathway in sporopollenin monomer biosynthesis.</title>
        <authorList>
            <person name="Grienenberger E."/>
            <person name="Kim S.S."/>
            <person name="Lallemand B."/>
            <person name="Geoffroy P."/>
            <person name="Heintz D."/>
            <person name="de Azevedo Souza C."/>
            <person name="Heitz T."/>
            <person name="Douglas C.J."/>
            <person name="Legrand M."/>
        </authorList>
    </citation>
    <scope>FUNCTION</scope>
    <scope>SUBCELLULAR LOCATION</scope>
    <scope>TISSUE SPECIFICITY</scope>
    <scope>DISRUPTION PHENOTYPE</scope>
</reference>
<reference key="5">
    <citation type="journal article" date="2012" name="Mol. Cell. Proteomics">
        <title>Comparative large-scale characterisation of plant vs. mammal proteins reveals similar and idiosyncratic N-alpha acetylation features.</title>
        <authorList>
            <person name="Bienvenut W.V."/>
            <person name="Sumpton D."/>
            <person name="Martinez A."/>
            <person name="Lilla S."/>
            <person name="Espagne C."/>
            <person name="Meinnel T."/>
            <person name="Giglione C."/>
        </authorList>
    </citation>
    <scope>ACETYLATION [LARGE SCALE ANALYSIS] AT SER-2</scope>
    <scope>CLEAVAGE OF INITIATOR METHIONINE [LARGE SCALE ANALYSIS]</scope>
    <scope>IDENTIFICATION BY MASS SPECTROMETRY [LARGE SCALE ANALYSIS]</scope>
</reference>
<gene>
    <name type="primary">TKPR2</name>
    <name type="synonym">CCRL6</name>
    <name type="ordered locus">At1g68540</name>
    <name type="ORF">T26J14.11</name>
</gene>
<accession>Q9CA28</accession>
<proteinExistence type="evidence at protein level"/>
<evidence type="ECO:0000250" key="1">
    <source>
        <dbReference type="UniProtKB" id="A0A059TC02"/>
    </source>
</evidence>
<evidence type="ECO:0000255" key="2"/>
<evidence type="ECO:0000269" key="3">
    <source>
    </source>
</evidence>
<evidence type="ECO:0000305" key="4"/>
<evidence type="ECO:0007744" key="5">
    <source>
    </source>
</evidence>
<dbReference type="EC" id="1.1.1.-"/>
<dbReference type="EMBL" id="AC011915">
    <property type="protein sequence ID" value="AAG52392.1"/>
    <property type="molecule type" value="Genomic_DNA"/>
</dbReference>
<dbReference type="EMBL" id="CP002684">
    <property type="protein sequence ID" value="AEE34806.1"/>
    <property type="molecule type" value="Genomic_DNA"/>
</dbReference>
<dbReference type="EMBL" id="BT028984">
    <property type="protein sequence ID" value="ABI93893.1"/>
    <property type="molecule type" value="mRNA"/>
</dbReference>
<dbReference type="PIR" id="F96709">
    <property type="entry name" value="F96709"/>
</dbReference>
<dbReference type="RefSeq" id="NP_177021.1">
    <molecule id="Q9CA28-1"/>
    <property type="nucleotide sequence ID" value="NM_105525.5"/>
</dbReference>
<dbReference type="SMR" id="Q9CA28"/>
<dbReference type="FunCoup" id="Q9CA28">
    <property type="interactions" value="198"/>
</dbReference>
<dbReference type="STRING" id="3702.Q9CA28"/>
<dbReference type="iPTMnet" id="Q9CA28"/>
<dbReference type="PaxDb" id="3702-AT1G68540.1"/>
<dbReference type="ProteomicsDB" id="232428">
    <molecule id="Q9CA28-1"/>
</dbReference>
<dbReference type="EnsemblPlants" id="AT1G68540.1">
    <molecule id="Q9CA28-1"/>
    <property type="protein sequence ID" value="AT1G68540.1"/>
    <property type="gene ID" value="AT1G68540"/>
</dbReference>
<dbReference type="GeneID" id="843183"/>
<dbReference type="Gramene" id="AT1G68540.1">
    <molecule id="Q9CA28-1"/>
    <property type="protein sequence ID" value="AT1G68540.1"/>
    <property type="gene ID" value="AT1G68540"/>
</dbReference>
<dbReference type="KEGG" id="ath:AT1G68540"/>
<dbReference type="Araport" id="AT1G68540"/>
<dbReference type="TAIR" id="AT1G68540">
    <property type="gene designation" value="TKPR2"/>
</dbReference>
<dbReference type="eggNOG" id="KOG1502">
    <property type="taxonomic scope" value="Eukaryota"/>
</dbReference>
<dbReference type="InParanoid" id="Q9CA28"/>
<dbReference type="OMA" id="RYILGHQ"/>
<dbReference type="OrthoDB" id="2735536at2759"/>
<dbReference type="PhylomeDB" id="Q9CA28"/>
<dbReference type="BioCyc" id="ARA:AT1G68540-MONOMER"/>
<dbReference type="BioCyc" id="MetaCyc:AT1G68540-MONOMER"/>
<dbReference type="PRO" id="PR:Q9CA28"/>
<dbReference type="Proteomes" id="UP000006548">
    <property type="component" value="Chromosome 1"/>
</dbReference>
<dbReference type="ExpressionAtlas" id="Q9CA28">
    <property type="expression patterns" value="baseline and differential"/>
</dbReference>
<dbReference type="GO" id="GO:0005829">
    <property type="term" value="C:cytosol"/>
    <property type="evidence" value="ECO:0000314"/>
    <property type="project" value="TAIR"/>
</dbReference>
<dbReference type="GO" id="GO:0016491">
    <property type="term" value="F:oxidoreductase activity"/>
    <property type="evidence" value="ECO:0007669"/>
    <property type="project" value="UniProtKB-KW"/>
</dbReference>
<dbReference type="GO" id="GO:0010584">
    <property type="term" value="P:pollen exine formation"/>
    <property type="evidence" value="ECO:0000315"/>
    <property type="project" value="TAIR"/>
</dbReference>
<dbReference type="GO" id="GO:0080110">
    <property type="term" value="P:sporopollenin biosynthetic process"/>
    <property type="evidence" value="ECO:0000315"/>
    <property type="project" value="TAIR"/>
</dbReference>
<dbReference type="CDD" id="cd08958">
    <property type="entry name" value="FR_SDR_e"/>
    <property type="match status" value="1"/>
</dbReference>
<dbReference type="FunFam" id="3.40.50.720:FF:000085">
    <property type="entry name" value="Dihydroflavonol reductase"/>
    <property type="match status" value="1"/>
</dbReference>
<dbReference type="Gene3D" id="3.40.50.720">
    <property type="entry name" value="NAD(P)-binding Rossmann-like Domain"/>
    <property type="match status" value="1"/>
</dbReference>
<dbReference type="InterPro" id="IPR001509">
    <property type="entry name" value="Epimerase_deHydtase"/>
</dbReference>
<dbReference type="InterPro" id="IPR036291">
    <property type="entry name" value="NAD(P)-bd_dom_sf"/>
</dbReference>
<dbReference type="InterPro" id="IPR050425">
    <property type="entry name" value="NAD(P)_dehydrat-like"/>
</dbReference>
<dbReference type="PANTHER" id="PTHR10366">
    <property type="entry name" value="NAD DEPENDENT EPIMERASE/DEHYDRATASE"/>
    <property type="match status" value="1"/>
</dbReference>
<dbReference type="PANTHER" id="PTHR10366:SF503">
    <property type="entry name" value="TETRAKETIDE ALPHA-PYRONE REDUCTASE 2"/>
    <property type="match status" value="1"/>
</dbReference>
<dbReference type="Pfam" id="PF01370">
    <property type="entry name" value="Epimerase"/>
    <property type="match status" value="1"/>
</dbReference>
<dbReference type="SUPFAM" id="SSF51735">
    <property type="entry name" value="NAD(P)-binding Rossmann-fold domains"/>
    <property type="match status" value="1"/>
</dbReference>
<organism>
    <name type="scientific">Arabidopsis thaliana</name>
    <name type="common">Mouse-ear cress</name>
    <dbReference type="NCBI Taxonomy" id="3702"/>
    <lineage>
        <taxon>Eukaryota</taxon>
        <taxon>Viridiplantae</taxon>
        <taxon>Streptophyta</taxon>
        <taxon>Embryophyta</taxon>
        <taxon>Tracheophyta</taxon>
        <taxon>Spermatophyta</taxon>
        <taxon>Magnoliopsida</taxon>
        <taxon>eudicotyledons</taxon>
        <taxon>Gunneridae</taxon>
        <taxon>Pentapetalae</taxon>
        <taxon>rosids</taxon>
        <taxon>malvids</taxon>
        <taxon>Brassicales</taxon>
        <taxon>Brassicaceae</taxon>
        <taxon>Camelineae</taxon>
        <taxon>Arabidopsis</taxon>
    </lineage>
</organism>
<keyword id="KW-0007">Acetylation</keyword>
<keyword id="KW-0025">Alternative splicing</keyword>
<keyword id="KW-0963">Cytoplasm</keyword>
<keyword id="KW-0521">NADP</keyword>
<keyword id="KW-0560">Oxidoreductase</keyword>
<keyword id="KW-1185">Reference proteome</keyword>
<comment type="function">
    <text evidence="3">May be involved in the biosynthesis of hydroxylated tetraketide compounds that serve as sporopollenin precursors (the main constituents of exine). Acts on tetraketide alpha-pyrones and reduces the carbonyl function on the tetraketide alkyl chain to a secondary alcohol function.</text>
</comment>
<comment type="subcellular location">
    <subcellularLocation>
        <location evidence="3">Cytoplasm</location>
    </subcellularLocation>
</comment>
<comment type="alternative products">
    <event type="alternative splicing"/>
    <isoform>
        <id>Q9CA28-1</id>
        <name>1</name>
        <sequence type="displayed"/>
    </isoform>
    <text>A number of isoforms are produced. According to EST sequences.</text>
</comment>
<comment type="disruption phenotype">
    <text evidence="3">No visible phenotype under normal growth conditions.</text>
</comment>
<comment type="similarity">
    <text evidence="4">Belongs to the NAD(P)-dependent epimerase/dehydratase family. Dihydroflavonol-4-reductase subfamily.</text>
</comment>
<sequence length="321" mass="35666">MSEYLVTGGTGFIASYIIKSLLELGHTVRTTVRNPRDEEKVGFLWEFQGAKQRLKILQADLTVEGSFDEAVNGVDGVFHTASPVLVPQDHNIQETLVDPIIKGTTNVMSSCAKSKATLKRIVLTSSCSSIRYRFDATEASPLNESHWSDPEYCKRFNLWYGYAKTLGEREAWRIAEEKGLDLVVVNPSFVVGPLLGPKPTSTLLMILAIAKGLAGEYPNFTVGFVHIDDVVAAHVLAMEEPKASGRIICSSSVAHWSEIIELMRNKYPNYPFENKCSNKEGDNSPHSMDTRKIHELGFGSFKSLPEMFDDCIISFQKKGLL</sequence>
<feature type="initiator methionine" description="Removed" evidence="5">
    <location>
        <position position="1"/>
    </location>
</feature>
<feature type="chain" id="PRO_0000418215" description="Tetraketide alpha-pyrone reductase 2">
    <location>
        <begin position="2"/>
        <end position="321"/>
    </location>
</feature>
<feature type="binding site" evidence="2">
    <location>
        <begin position="4"/>
        <end position="28"/>
    </location>
    <ligand>
        <name>NADP(+)</name>
        <dbReference type="ChEBI" id="CHEBI:58349"/>
    </ligand>
</feature>
<feature type="binding site" evidence="1">
    <location>
        <position position="40"/>
    </location>
    <ligand>
        <name>NADP(+)</name>
        <dbReference type="ChEBI" id="CHEBI:58349"/>
    </ligand>
</feature>
<feature type="binding site" evidence="1">
    <location>
        <position position="160"/>
    </location>
    <ligand>
        <name>NADP(+)</name>
        <dbReference type="ChEBI" id="CHEBI:58349"/>
    </ligand>
</feature>
<feature type="modified residue" description="N-acetylserine" evidence="5">
    <location>
        <position position="2"/>
    </location>
</feature>
<name>TKPR2_ARATH</name>
<protein>
    <recommendedName>
        <fullName>Tetraketide alpha-pyrone reductase 2</fullName>
        <ecNumber>1.1.1.-</ecNumber>
    </recommendedName>
    <alternativeName>
        <fullName>Protein CINNAMOYL-COA REDUCTASE-LIKE 6</fullName>
    </alternativeName>
</protein>